<accession>B0B809</accession>
<dbReference type="EMBL" id="AM884176">
    <property type="protein sequence ID" value="CAP04135.1"/>
    <property type="molecule type" value="Genomic_DNA"/>
</dbReference>
<dbReference type="RefSeq" id="WP_009873810.1">
    <property type="nucleotide sequence ID" value="NC_010287.1"/>
</dbReference>
<dbReference type="RefSeq" id="YP_001654768.1">
    <property type="nucleotide sequence ID" value="NC_010287.1"/>
</dbReference>
<dbReference type="SMR" id="B0B809"/>
<dbReference type="KEGG" id="ctb:CTL0696"/>
<dbReference type="PATRIC" id="fig|471472.4.peg.748"/>
<dbReference type="HOGENOM" id="CLU_002794_4_1_0"/>
<dbReference type="Proteomes" id="UP001154402">
    <property type="component" value="Chromosome"/>
</dbReference>
<dbReference type="GO" id="GO:0005737">
    <property type="term" value="C:cytoplasm"/>
    <property type="evidence" value="ECO:0007669"/>
    <property type="project" value="UniProtKB-SubCell"/>
</dbReference>
<dbReference type="GO" id="GO:0005525">
    <property type="term" value="F:GTP binding"/>
    <property type="evidence" value="ECO:0007669"/>
    <property type="project" value="UniProtKB-UniRule"/>
</dbReference>
<dbReference type="GO" id="GO:0003924">
    <property type="term" value="F:GTPase activity"/>
    <property type="evidence" value="ECO:0007669"/>
    <property type="project" value="InterPro"/>
</dbReference>
<dbReference type="GO" id="GO:0003746">
    <property type="term" value="F:translation elongation factor activity"/>
    <property type="evidence" value="ECO:0007669"/>
    <property type="project" value="UniProtKB-UniRule"/>
</dbReference>
<dbReference type="GO" id="GO:0032790">
    <property type="term" value="P:ribosome disassembly"/>
    <property type="evidence" value="ECO:0007669"/>
    <property type="project" value="TreeGrafter"/>
</dbReference>
<dbReference type="CDD" id="cd01886">
    <property type="entry name" value="EF-G"/>
    <property type="match status" value="1"/>
</dbReference>
<dbReference type="CDD" id="cd16262">
    <property type="entry name" value="EFG_III"/>
    <property type="match status" value="1"/>
</dbReference>
<dbReference type="CDD" id="cd01434">
    <property type="entry name" value="EFG_mtEFG1_IV"/>
    <property type="match status" value="1"/>
</dbReference>
<dbReference type="CDD" id="cd03713">
    <property type="entry name" value="EFG_mtEFG_C"/>
    <property type="match status" value="1"/>
</dbReference>
<dbReference type="CDD" id="cd04088">
    <property type="entry name" value="EFG_mtEFG_II"/>
    <property type="match status" value="1"/>
</dbReference>
<dbReference type="FunFam" id="2.40.30.10:FF:000006">
    <property type="entry name" value="Elongation factor G"/>
    <property type="match status" value="1"/>
</dbReference>
<dbReference type="FunFam" id="3.30.230.10:FF:000003">
    <property type="entry name" value="Elongation factor G"/>
    <property type="match status" value="1"/>
</dbReference>
<dbReference type="FunFam" id="3.30.70.240:FF:000001">
    <property type="entry name" value="Elongation factor G"/>
    <property type="match status" value="1"/>
</dbReference>
<dbReference type="FunFam" id="3.30.70.870:FF:000001">
    <property type="entry name" value="Elongation factor G"/>
    <property type="match status" value="1"/>
</dbReference>
<dbReference type="FunFam" id="3.40.50.300:FF:000029">
    <property type="entry name" value="Elongation factor G"/>
    <property type="match status" value="1"/>
</dbReference>
<dbReference type="Gene3D" id="3.30.230.10">
    <property type="match status" value="1"/>
</dbReference>
<dbReference type="Gene3D" id="3.30.70.240">
    <property type="match status" value="1"/>
</dbReference>
<dbReference type="Gene3D" id="3.30.70.870">
    <property type="entry name" value="Elongation Factor G (Translational Gtpase), domain 3"/>
    <property type="match status" value="1"/>
</dbReference>
<dbReference type="Gene3D" id="3.40.50.300">
    <property type="entry name" value="P-loop containing nucleotide triphosphate hydrolases"/>
    <property type="match status" value="1"/>
</dbReference>
<dbReference type="Gene3D" id="2.40.30.10">
    <property type="entry name" value="Translation factors"/>
    <property type="match status" value="1"/>
</dbReference>
<dbReference type="HAMAP" id="MF_00054_B">
    <property type="entry name" value="EF_G_EF_2_B"/>
    <property type="match status" value="1"/>
</dbReference>
<dbReference type="InterPro" id="IPR041095">
    <property type="entry name" value="EFG_II"/>
</dbReference>
<dbReference type="InterPro" id="IPR009022">
    <property type="entry name" value="EFG_III"/>
</dbReference>
<dbReference type="InterPro" id="IPR035647">
    <property type="entry name" value="EFG_III/V"/>
</dbReference>
<dbReference type="InterPro" id="IPR047872">
    <property type="entry name" value="EFG_IV"/>
</dbReference>
<dbReference type="InterPro" id="IPR035649">
    <property type="entry name" value="EFG_V"/>
</dbReference>
<dbReference type="InterPro" id="IPR000640">
    <property type="entry name" value="EFG_V-like"/>
</dbReference>
<dbReference type="InterPro" id="IPR004161">
    <property type="entry name" value="EFTu-like_2"/>
</dbReference>
<dbReference type="InterPro" id="IPR031157">
    <property type="entry name" value="G_TR_CS"/>
</dbReference>
<dbReference type="InterPro" id="IPR027417">
    <property type="entry name" value="P-loop_NTPase"/>
</dbReference>
<dbReference type="InterPro" id="IPR020568">
    <property type="entry name" value="Ribosomal_Su5_D2-typ_SF"/>
</dbReference>
<dbReference type="InterPro" id="IPR014721">
    <property type="entry name" value="Ribsml_uS5_D2-typ_fold_subgr"/>
</dbReference>
<dbReference type="InterPro" id="IPR005225">
    <property type="entry name" value="Small_GTP-bd"/>
</dbReference>
<dbReference type="InterPro" id="IPR000795">
    <property type="entry name" value="T_Tr_GTP-bd_dom"/>
</dbReference>
<dbReference type="InterPro" id="IPR009000">
    <property type="entry name" value="Transl_B-barrel_sf"/>
</dbReference>
<dbReference type="InterPro" id="IPR004540">
    <property type="entry name" value="Transl_elong_EFG/EF2"/>
</dbReference>
<dbReference type="InterPro" id="IPR005517">
    <property type="entry name" value="Transl_elong_EFG/EF2_IV"/>
</dbReference>
<dbReference type="NCBIfam" id="TIGR00484">
    <property type="entry name" value="EF-G"/>
    <property type="match status" value="1"/>
</dbReference>
<dbReference type="NCBIfam" id="NF009381">
    <property type="entry name" value="PRK12740.1-5"/>
    <property type="match status" value="1"/>
</dbReference>
<dbReference type="NCBIfam" id="TIGR00231">
    <property type="entry name" value="small_GTP"/>
    <property type="match status" value="1"/>
</dbReference>
<dbReference type="PANTHER" id="PTHR43261:SF1">
    <property type="entry name" value="RIBOSOME-RELEASING FACTOR 2, MITOCHONDRIAL"/>
    <property type="match status" value="1"/>
</dbReference>
<dbReference type="PANTHER" id="PTHR43261">
    <property type="entry name" value="TRANSLATION ELONGATION FACTOR G-RELATED"/>
    <property type="match status" value="1"/>
</dbReference>
<dbReference type="Pfam" id="PF00679">
    <property type="entry name" value="EFG_C"/>
    <property type="match status" value="1"/>
</dbReference>
<dbReference type="Pfam" id="PF14492">
    <property type="entry name" value="EFG_III"/>
    <property type="match status" value="1"/>
</dbReference>
<dbReference type="Pfam" id="PF03764">
    <property type="entry name" value="EFG_IV"/>
    <property type="match status" value="1"/>
</dbReference>
<dbReference type="Pfam" id="PF00009">
    <property type="entry name" value="GTP_EFTU"/>
    <property type="match status" value="1"/>
</dbReference>
<dbReference type="Pfam" id="PF03144">
    <property type="entry name" value="GTP_EFTU_D2"/>
    <property type="match status" value="1"/>
</dbReference>
<dbReference type="PRINTS" id="PR00315">
    <property type="entry name" value="ELONGATNFCT"/>
</dbReference>
<dbReference type="SMART" id="SM00838">
    <property type="entry name" value="EFG_C"/>
    <property type="match status" value="1"/>
</dbReference>
<dbReference type="SMART" id="SM00889">
    <property type="entry name" value="EFG_IV"/>
    <property type="match status" value="1"/>
</dbReference>
<dbReference type="SUPFAM" id="SSF54980">
    <property type="entry name" value="EF-G C-terminal domain-like"/>
    <property type="match status" value="2"/>
</dbReference>
<dbReference type="SUPFAM" id="SSF52540">
    <property type="entry name" value="P-loop containing nucleoside triphosphate hydrolases"/>
    <property type="match status" value="1"/>
</dbReference>
<dbReference type="SUPFAM" id="SSF54211">
    <property type="entry name" value="Ribosomal protein S5 domain 2-like"/>
    <property type="match status" value="1"/>
</dbReference>
<dbReference type="SUPFAM" id="SSF50447">
    <property type="entry name" value="Translation proteins"/>
    <property type="match status" value="1"/>
</dbReference>
<dbReference type="PROSITE" id="PS00301">
    <property type="entry name" value="G_TR_1"/>
    <property type="match status" value="1"/>
</dbReference>
<dbReference type="PROSITE" id="PS51722">
    <property type="entry name" value="G_TR_2"/>
    <property type="match status" value="1"/>
</dbReference>
<comment type="function">
    <text evidence="1">Catalyzes the GTP-dependent ribosomal translocation step during translation elongation. During this step, the ribosome changes from the pre-translocational (PRE) to the post-translocational (POST) state as the newly formed A-site-bound peptidyl-tRNA and P-site-bound deacylated tRNA move to the P and E sites, respectively. Catalyzes the coordinated movement of the two tRNA molecules, the mRNA and conformational changes in the ribosome.</text>
</comment>
<comment type="subcellular location">
    <subcellularLocation>
        <location evidence="1">Cytoplasm</location>
    </subcellularLocation>
</comment>
<comment type="similarity">
    <text evidence="1">Belongs to the TRAFAC class translation factor GTPase superfamily. Classic translation factor GTPase family. EF-G/EF-2 subfamily.</text>
</comment>
<sequence length="694" mass="76493">MSDQEFGLDAIRNIGIMAHIDAGKTTTTERILFYAGRTHKIGEVHEGGATMDWMEQEQERGITITSAATTVFWLGAKINIIDTPGHVDFTIEVERSLRVLDGAVAVFDAVSGVEPQSETVWRQANKYGVPRIAFVNKMDRMGANYFGAVESMREKLGANAIPVHCPIGSESQFVGMVDLISQKALYFLEETLGAKWEERKIPEDLQEQCATLRMQLLEELATVDESNEAFMEKVLENPDSITEEEIHTVMRKGVIEGKINPVLCGSAFKNKGVQQLLDVIVKWLPSPLDRGNVRGINLKTGEEVSLKPSKDGPLAALAFKIMTDPYVGRITFIRIYSGTLKKGSAILNSTKDKKERISRLLEMHANERTDRDEFTVGDIGACVGLKFSVTGDTLCDENQEIVLERIEAPEPVIDMAIEPKSKGDREKLAQALSALSEEDPTFRVSTNEETGQTIISGMGELHLDILRDRMIREFRVEANVGKPQVSYKETITKTSNSETKYVKQSGGRGQYAHVCLEIEPNEPGKGNEVVSKIVGGVIPKEYIPAVIKGVEEGLNSGVLAGYGLVDVKVSIVFGSYHEVDSSEMAFKICGSMAVKEACRKALPVILEPIMKVTVITPEDHLGDVIGDLNRRRGKILGQESSRNMAQVSAEVPLSEMFGYMTSLRSLTSGRATSTMEPAFFAKVPQKIQEEIVKK</sequence>
<gene>
    <name evidence="1" type="primary">fusA</name>
    <name type="ordered locus">CTL0696</name>
</gene>
<evidence type="ECO:0000255" key="1">
    <source>
        <dbReference type="HAMAP-Rule" id="MF_00054"/>
    </source>
</evidence>
<organism>
    <name type="scientific">Chlamydia trachomatis serovar L2 (strain ATCC VR-902B / DSM 19102 / 434/Bu)</name>
    <dbReference type="NCBI Taxonomy" id="471472"/>
    <lineage>
        <taxon>Bacteria</taxon>
        <taxon>Pseudomonadati</taxon>
        <taxon>Chlamydiota</taxon>
        <taxon>Chlamydiia</taxon>
        <taxon>Chlamydiales</taxon>
        <taxon>Chlamydiaceae</taxon>
        <taxon>Chlamydia/Chlamydophila group</taxon>
        <taxon>Chlamydia</taxon>
    </lineage>
</organism>
<keyword id="KW-0963">Cytoplasm</keyword>
<keyword id="KW-0251">Elongation factor</keyword>
<keyword id="KW-0342">GTP-binding</keyword>
<keyword id="KW-0547">Nucleotide-binding</keyword>
<keyword id="KW-0648">Protein biosynthesis</keyword>
<reference key="1">
    <citation type="journal article" date="2008" name="Genome Res.">
        <title>Chlamydia trachomatis: genome sequence analysis of lymphogranuloma venereum isolates.</title>
        <authorList>
            <person name="Thomson N.R."/>
            <person name="Holden M.T.G."/>
            <person name="Carder C."/>
            <person name="Lennard N."/>
            <person name="Lockey S.J."/>
            <person name="Marsh P."/>
            <person name="Skipp P."/>
            <person name="O'Connor C.D."/>
            <person name="Goodhead I."/>
            <person name="Norbertzcak H."/>
            <person name="Harris B."/>
            <person name="Ormond D."/>
            <person name="Rance R."/>
            <person name="Quail M.A."/>
            <person name="Parkhill J."/>
            <person name="Stephens R.S."/>
            <person name="Clarke I.N."/>
        </authorList>
    </citation>
    <scope>NUCLEOTIDE SEQUENCE [LARGE SCALE GENOMIC DNA]</scope>
    <source>
        <strain>ATCC VR-902B / DSM 19102 / 434/Bu</strain>
    </source>
</reference>
<protein>
    <recommendedName>
        <fullName evidence="1">Elongation factor G</fullName>
        <shortName evidence="1">EF-G</shortName>
    </recommendedName>
</protein>
<proteinExistence type="inferred from homology"/>
<name>EFG_CHLT2</name>
<feature type="chain" id="PRO_1000091698" description="Elongation factor G">
    <location>
        <begin position="1"/>
        <end position="694"/>
    </location>
</feature>
<feature type="domain" description="tr-type G">
    <location>
        <begin position="9"/>
        <end position="288"/>
    </location>
</feature>
<feature type="binding site" evidence="1">
    <location>
        <begin position="18"/>
        <end position="25"/>
    </location>
    <ligand>
        <name>GTP</name>
        <dbReference type="ChEBI" id="CHEBI:37565"/>
    </ligand>
</feature>
<feature type="binding site" evidence="1">
    <location>
        <begin position="82"/>
        <end position="86"/>
    </location>
    <ligand>
        <name>GTP</name>
        <dbReference type="ChEBI" id="CHEBI:37565"/>
    </ligand>
</feature>
<feature type="binding site" evidence="1">
    <location>
        <begin position="136"/>
        <end position="139"/>
    </location>
    <ligand>
        <name>GTP</name>
        <dbReference type="ChEBI" id="CHEBI:37565"/>
    </ligand>
</feature>